<proteinExistence type="inferred from homology"/>
<evidence type="ECO:0000255" key="1">
    <source>
        <dbReference type="HAMAP-Rule" id="MF_00195"/>
    </source>
</evidence>
<keyword id="KW-0342">GTP-binding</keyword>
<keyword id="KW-0547">Nucleotide-binding</keyword>
<keyword id="KW-1185">Reference proteome</keyword>
<keyword id="KW-0677">Repeat</keyword>
<keyword id="KW-0690">Ribosome biogenesis</keyword>
<feature type="chain" id="PRO_1000124357" description="GTPase Der">
    <location>
        <begin position="1"/>
        <end position="490"/>
    </location>
</feature>
<feature type="domain" description="EngA-type G 1">
    <location>
        <begin position="3"/>
        <end position="166"/>
    </location>
</feature>
<feature type="domain" description="EngA-type G 2">
    <location>
        <begin position="203"/>
        <end position="376"/>
    </location>
</feature>
<feature type="domain" description="KH-like" evidence="1">
    <location>
        <begin position="377"/>
        <end position="461"/>
    </location>
</feature>
<feature type="binding site" evidence="1">
    <location>
        <begin position="9"/>
        <end position="16"/>
    </location>
    <ligand>
        <name>GTP</name>
        <dbReference type="ChEBI" id="CHEBI:37565"/>
        <label>1</label>
    </ligand>
</feature>
<feature type="binding site" evidence="1">
    <location>
        <begin position="56"/>
        <end position="60"/>
    </location>
    <ligand>
        <name>GTP</name>
        <dbReference type="ChEBI" id="CHEBI:37565"/>
        <label>1</label>
    </ligand>
</feature>
<feature type="binding site" evidence="1">
    <location>
        <begin position="118"/>
        <end position="121"/>
    </location>
    <ligand>
        <name>GTP</name>
        <dbReference type="ChEBI" id="CHEBI:37565"/>
        <label>1</label>
    </ligand>
</feature>
<feature type="binding site" evidence="1">
    <location>
        <begin position="209"/>
        <end position="216"/>
    </location>
    <ligand>
        <name>GTP</name>
        <dbReference type="ChEBI" id="CHEBI:37565"/>
        <label>2</label>
    </ligand>
</feature>
<feature type="binding site" evidence="1">
    <location>
        <begin position="256"/>
        <end position="260"/>
    </location>
    <ligand>
        <name>GTP</name>
        <dbReference type="ChEBI" id="CHEBI:37565"/>
        <label>2</label>
    </ligand>
</feature>
<feature type="binding site" evidence="1">
    <location>
        <begin position="321"/>
        <end position="324"/>
    </location>
    <ligand>
        <name>GTP</name>
        <dbReference type="ChEBI" id="CHEBI:37565"/>
        <label>2</label>
    </ligand>
</feature>
<accession>B7LCQ1</accession>
<dbReference type="EMBL" id="CU928145">
    <property type="protein sequence ID" value="CAU98669.1"/>
    <property type="molecule type" value="Genomic_DNA"/>
</dbReference>
<dbReference type="RefSeq" id="WP_000249410.1">
    <property type="nucleotide sequence ID" value="NC_011748.1"/>
</dbReference>
<dbReference type="SMR" id="B7LCQ1"/>
<dbReference type="GeneID" id="75206204"/>
<dbReference type="KEGG" id="eck:EC55989_2796"/>
<dbReference type="HOGENOM" id="CLU_016077_6_2_6"/>
<dbReference type="Proteomes" id="UP000000746">
    <property type="component" value="Chromosome"/>
</dbReference>
<dbReference type="GO" id="GO:0005525">
    <property type="term" value="F:GTP binding"/>
    <property type="evidence" value="ECO:0007669"/>
    <property type="project" value="UniProtKB-UniRule"/>
</dbReference>
<dbReference type="GO" id="GO:0043022">
    <property type="term" value="F:ribosome binding"/>
    <property type="evidence" value="ECO:0007669"/>
    <property type="project" value="TreeGrafter"/>
</dbReference>
<dbReference type="GO" id="GO:0042254">
    <property type="term" value="P:ribosome biogenesis"/>
    <property type="evidence" value="ECO:0007669"/>
    <property type="project" value="UniProtKB-KW"/>
</dbReference>
<dbReference type="CDD" id="cd01894">
    <property type="entry name" value="EngA1"/>
    <property type="match status" value="1"/>
</dbReference>
<dbReference type="CDD" id="cd01895">
    <property type="entry name" value="EngA2"/>
    <property type="match status" value="1"/>
</dbReference>
<dbReference type="FunFam" id="3.30.300.20:FF:000004">
    <property type="entry name" value="GTPase Der"/>
    <property type="match status" value="1"/>
</dbReference>
<dbReference type="FunFam" id="3.40.50.300:FF:000040">
    <property type="entry name" value="GTPase Der"/>
    <property type="match status" value="1"/>
</dbReference>
<dbReference type="FunFam" id="3.40.50.300:FF:000057">
    <property type="entry name" value="GTPase Der"/>
    <property type="match status" value="1"/>
</dbReference>
<dbReference type="Gene3D" id="3.30.300.20">
    <property type="match status" value="1"/>
</dbReference>
<dbReference type="Gene3D" id="3.40.50.300">
    <property type="entry name" value="P-loop containing nucleotide triphosphate hydrolases"/>
    <property type="match status" value="2"/>
</dbReference>
<dbReference type="HAMAP" id="MF_00195">
    <property type="entry name" value="GTPase_Der"/>
    <property type="match status" value="1"/>
</dbReference>
<dbReference type="InterPro" id="IPR031166">
    <property type="entry name" value="G_ENGA"/>
</dbReference>
<dbReference type="InterPro" id="IPR006073">
    <property type="entry name" value="GTP-bd"/>
</dbReference>
<dbReference type="InterPro" id="IPR016484">
    <property type="entry name" value="GTPase_Der"/>
</dbReference>
<dbReference type="InterPro" id="IPR032859">
    <property type="entry name" value="KH_dom-like"/>
</dbReference>
<dbReference type="InterPro" id="IPR015946">
    <property type="entry name" value="KH_dom-like_a/b"/>
</dbReference>
<dbReference type="InterPro" id="IPR027417">
    <property type="entry name" value="P-loop_NTPase"/>
</dbReference>
<dbReference type="InterPro" id="IPR005225">
    <property type="entry name" value="Small_GTP-bd"/>
</dbReference>
<dbReference type="NCBIfam" id="TIGR03594">
    <property type="entry name" value="GTPase_EngA"/>
    <property type="match status" value="1"/>
</dbReference>
<dbReference type="NCBIfam" id="TIGR00231">
    <property type="entry name" value="small_GTP"/>
    <property type="match status" value="2"/>
</dbReference>
<dbReference type="PANTHER" id="PTHR43834">
    <property type="entry name" value="GTPASE DER"/>
    <property type="match status" value="1"/>
</dbReference>
<dbReference type="PANTHER" id="PTHR43834:SF6">
    <property type="entry name" value="GTPASE DER"/>
    <property type="match status" value="1"/>
</dbReference>
<dbReference type="Pfam" id="PF14714">
    <property type="entry name" value="KH_dom-like"/>
    <property type="match status" value="1"/>
</dbReference>
<dbReference type="Pfam" id="PF01926">
    <property type="entry name" value="MMR_HSR1"/>
    <property type="match status" value="2"/>
</dbReference>
<dbReference type="PIRSF" id="PIRSF006485">
    <property type="entry name" value="GTP-binding_EngA"/>
    <property type="match status" value="1"/>
</dbReference>
<dbReference type="PRINTS" id="PR00326">
    <property type="entry name" value="GTP1OBG"/>
</dbReference>
<dbReference type="SUPFAM" id="SSF52540">
    <property type="entry name" value="P-loop containing nucleoside triphosphate hydrolases"/>
    <property type="match status" value="2"/>
</dbReference>
<dbReference type="PROSITE" id="PS51712">
    <property type="entry name" value="G_ENGA"/>
    <property type="match status" value="2"/>
</dbReference>
<name>DER_ECO55</name>
<organism>
    <name type="scientific">Escherichia coli (strain 55989 / EAEC)</name>
    <dbReference type="NCBI Taxonomy" id="585055"/>
    <lineage>
        <taxon>Bacteria</taxon>
        <taxon>Pseudomonadati</taxon>
        <taxon>Pseudomonadota</taxon>
        <taxon>Gammaproteobacteria</taxon>
        <taxon>Enterobacterales</taxon>
        <taxon>Enterobacteriaceae</taxon>
        <taxon>Escherichia</taxon>
    </lineage>
</organism>
<gene>
    <name evidence="1" type="primary">der</name>
    <name type="synonym">engA</name>
    <name type="ordered locus">EC55989_2796</name>
</gene>
<reference key="1">
    <citation type="journal article" date="2009" name="PLoS Genet.">
        <title>Organised genome dynamics in the Escherichia coli species results in highly diverse adaptive paths.</title>
        <authorList>
            <person name="Touchon M."/>
            <person name="Hoede C."/>
            <person name="Tenaillon O."/>
            <person name="Barbe V."/>
            <person name="Baeriswyl S."/>
            <person name="Bidet P."/>
            <person name="Bingen E."/>
            <person name="Bonacorsi S."/>
            <person name="Bouchier C."/>
            <person name="Bouvet O."/>
            <person name="Calteau A."/>
            <person name="Chiapello H."/>
            <person name="Clermont O."/>
            <person name="Cruveiller S."/>
            <person name="Danchin A."/>
            <person name="Diard M."/>
            <person name="Dossat C."/>
            <person name="Karoui M.E."/>
            <person name="Frapy E."/>
            <person name="Garry L."/>
            <person name="Ghigo J.M."/>
            <person name="Gilles A.M."/>
            <person name="Johnson J."/>
            <person name="Le Bouguenec C."/>
            <person name="Lescat M."/>
            <person name="Mangenot S."/>
            <person name="Martinez-Jehanne V."/>
            <person name="Matic I."/>
            <person name="Nassif X."/>
            <person name="Oztas S."/>
            <person name="Petit M.A."/>
            <person name="Pichon C."/>
            <person name="Rouy Z."/>
            <person name="Ruf C.S."/>
            <person name="Schneider D."/>
            <person name="Tourret J."/>
            <person name="Vacherie B."/>
            <person name="Vallenet D."/>
            <person name="Medigue C."/>
            <person name="Rocha E.P.C."/>
            <person name="Denamur E."/>
        </authorList>
    </citation>
    <scope>NUCLEOTIDE SEQUENCE [LARGE SCALE GENOMIC DNA]</scope>
    <source>
        <strain>55989 / EAEC</strain>
    </source>
</reference>
<protein>
    <recommendedName>
        <fullName evidence="1">GTPase Der</fullName>
    </recommendedName>
    <alternativeName>
        <fullName evidence="1">GTP-binding protein EngA</fullName>
    </alternativeName>
</protein>
<comment type="function">
    <text evidence="1">GTPase that plays an essential role in the late steps of ribosome biogenesis.</text>
</comment>
<comment type="subunit">
    <text evidence="1">Associates with the 50S ribosomal subunit.</text>
</comment>
<comment type="similarity">
    <text evidence="1">Belongs to the TRAFAC class TrmE-Era-EngA-EngB-Septin-like GTPase superfamily. EngA (Der) GTPase family.</text>
</comment>
<sequence>MVPVVALVGRPNVGKSTLFNRLTRTRDALVADFPGLTRDRKYGRAEIEGREFICIDTGGIDGTEDGVETRMAEQSLLAIEEADVVLFMVDARAGLMPADEAIAKHLRSREKPTFLVANKTDGLDPDQAVVDFYSLGLGEIYPIAASHGRGVLSLLEHVLLPWMEDLAPQEEVDEDAEYWAQFEAEENGEEEEEDDFDPQSLPIKLAIVGRPNVGKSTLTNRILGEERVVVYDMPGTTRDSIYIPMERDGREYVLIDTAGVRKRGKITDAVEKFSVIKTLQAIEDANVVMLVIDAREGISDQDLSLLGFILNSGRSLVIVVNKWDGLSQEVKEQVKETLDFRLGFIDFARVHFISALHGSGVGNLFESVREAYDSSTRRVGTSMLTRIMTMAVEDHQPPLVRGRRVKLKYAHAGGYNPPIVVIHGNQVKDLPDSYKRYLMNYFRKSLDVMGSPIRIQFKEGENPYANKRNTLTPTQMRKRKRLMKHIKKNK</sequence>